<protein>
    <recommendedName>
        <fullName evidence="1">Putative double-stranded DNA mimic protein HAPS_1002</fullName>
    </recommendedName>
</protein>
<proteinExistence type="inferred from homology"/>
<feature type="chain" id="PRO_1000200445" description="Putative double-stranded DNA mimic protein HAPS_1002">
    <location>
        <begin position="1"/>
        <end position="103"/>
    </location>
</feature>
<reference key="1">
    <citation type="journal article" date="2009" name="J. Bacteriol.">
        <title>Complete genome sequence of Haemophilus parasuis SH0165.</title>
        <authorList>
            <person name="Yue M."/>
            <person name="Yang F."/>
            <person name="Yang J."/>
            <person name="Bei W."/>
            <person name="Cai X."/>
            <person name="Chen L."/>
            <person name="Dong J."/>
            <person name="Zhou R."/>
            <person name="Jin M."/>
            <person name="Jin Q."/>
            <person name="Chen H."/>
        </authorList>
    </citation>
    <scope>NUCLEOTIDE SEQUENCE [LARGE SCALE GENOMIC DNA]</scope>
    <source>
        <strain>SH0165</strain>
    </source>
</reference>
<evidence type="ECO:0000255" key="1">
    <source>
        <dbReference type="HAMAP-Rule" id="MF_00680"/>
    </source>
</evidence>
<organism>
    <name type="scientific">Glaesserella parasuis serovar 5 (strain SH0165)</name>
    <name type="common">Haemophilus parasuis</name>
    <dbReference type="NCBI Taxonomy" id="557723"/>
    <lineage>
        <taxon>Bacteria</taxon>
        <taxon>Pseudomonadati</taxon>
        <taxon>Pseudomonadota</taxon>
        <taxon>Gammaproteobacteria</taxon>
        <taxon>Pasteurellales</taxon>
        <taxon>Pasteurellaceae</taxon>
        <taxon>Glaesserella</taxon>
    </lineage>
</organism>
<sequence length="103" mass="11898">MANLSPDEAIELAYDIFLEMASDNLEPADILLFNLQFEERGAVEMVETSENWEQEIGVLIDPDAFAEVWIGLINQNDEMDDIFARFLISNDAENREYHVIWKS</sequence>
<dbReference type="EMBL" id="CP001321">
    <property type="protein sequence ID" value="ACL32621.1"/>
    <property type="molecule type" value="Genomic_DNA"/>
</dbReference>
<dbReference type="RefSeq" id="WP_005711639.1">
    <property type="nucleotide sequence ID" value="NC_011852.1"/>
</dbReference>
<dbReference type="SMR" id="B8F5L9"/>
<dbReference type="STRING" id="557723.HAPS_1002"/>
<dbReference type="KEGG" id="hap:HAPS_1002"/>
<dbReference type="HOGENOM" id="CLU_143392_0_0_6"/>
<dbReference type="Proteomes" id="UP000006743">
    <property type="component" value="Chromosome"/>
</dbReference>
<dbReference type="Gene3D" id="3.10.450.140">
    <property type="entry name" value="dsDNA mimic, putative"/>
    <property type="match status" value="1"/>
</dbReference>
<dbReference type="HAMAP" id="MF_00680">
    <property type="entry name" value="Put_dsDNA_mimic"/>
    <property type="match status" value="1"/>
</dbReference>
<dbReference type="InterPro" id="IPR007376">
    <property type="entry name" value="dsDNA_mimic_put"/>
</dbReference>
<dbReference type="InterPro" id="IPR036763">
    <property type="entry name" value="Put_dsDNA_mimic_sf"/>
</dbReference>
<dbReference type="NCBIfam" id="NF003469">
    <property type="entry name" value="PRK05094.1"/>
    <property type="match status" value="1"/>
</dbReference>
<dbReference type="Pfam" id="PF04269">
    <property type="entry name" value="DUF440"/>
    <property type="match status" value="1"/>
</dbReference>
<dbReference type="PIRSF" id="PIRSF004916">
    <property type="entry name" value="UCP004916"/>
    <property type="match status" value="1"/>
</dbReference>
<dbReference type="SUPFAM" id="SSF102816">
    <property type="entry name" value="Putative dsDNA mimic"/>
    <property type="match status" value="1"/>
</dbReference>
<comment type="function">
    <text evidence="1">May act as a double-stranded DNA (dsDNA) mimic. Probably regulates the activity of a dsDNA-binding protein.</text>
</comment>
<comment type="similarity">
    <text evidence="1">Belongs to the putative dsDNA mimic protein family.</text>
</comment>
<gene>
    <name type="ordered locus">HAPS_1002</name>
</gene>
<name>Y1002_GLAP5</name>
<keyword id="KW-1185">Reference proteome</keyword>
<accession>B8F5L9</accession>